<organism>
    <name type="scientific">Brucella abortus biovar 1 (strain 9-941)</name>
    <dbReference type="NCBI Taxonomy" id="262698"/>
    <lineage>
        <taxon>Bacteria</taxon>
        <taxon>Pseudomonadati</taxon>
        <taxon>Pseudomonadota</taxon>
        <taxon>Alphaproteobacteria</taxon>
        <taxon>Hyphomicrobiales</taxon>
        <taxon>Brucellaceae</taxon>
        <taxon>Brucella/Ochrobactrum group</taxon>
        <taxon>Brucella</taxon>
    </lineage>
</organism>
<accession>Q57DU3</accession>
<comment type="function">
    <text evidence="1">NDH-1 shuttles electrons from NADH, via FMN and iron-sulfur (Fe-S) centers, to quinones in the respiratory chain. The immediate electron acceptor for the enzyme in this species is believed to be ubiquinone. Couples the redox reaction to proton translocation (for every two electrons transferred, four hydrogen ions are translocated across the cytoplasmic membrane), and thus conserves the redox energy in a proton gradient.</text>
</comment>
<comment type="catalytic activity">
    <reaction evidence="1">
        <text>a quinone + NADH + 5 H(+)(in) = a quinol + NAD(+) + 4 H(+)(out)</text>
        <dbReference type="Rhea" id="RHEA:57888"/>
        <dbReference type="ChEBI" id="CHEBI:15378"/>
        <dbReference type="ChEBI" id="CHEBI:24646"/>
        <dbReference type="ChEBI" id="CHEBI:57540"/>
        <dbReference type="ChEBI" id="CHEBI:57945"/>
        <dbReference type="ChEBI" id="CHEBI:132124"/>
    </reaction>
</comment>
<comment type="cofactor">
    <cofactor evidence="1">
        <name>[4Fe-4S] cluster</name>
        <dbReference type="ChEBI" id="CHEBI:49883"/>
    </cofactor>
    <text evidence="1">Binds 2 [4Fe-4S] clusters per subunit.</text>
</comment>
<comment type="subunit">
    <text evidence="1">NDH-1 is composed of 14 different subunits. Subunits NuoA, H, J, K, L, M, N constitute the membrane sector of the complex.</text>
</comment>
<comment type="subcellular location">
    <subcellularLocation>
        <location evidence="1">Cell inner membrane</location>
        <topology evidence="1">Peripheral membrane protein</topology>
    </subcellularLocation>
</comment>
<comment type="similarity">
    <text evidence="1">Belongs to the complex I 23 kDa subunit family.</text>
</comment>
<feature type="chain" id="PRO_0000250883" description="NADH-quinone oxidoreductase subunit I">
    <location>
        <begin position="1"/>
        <end position="163"/>
    </location>
</feature>
<feature type="domain" description="4Fe-4S ferredoxin-type 1" evidence="1">
    <location>
        <begin position="53"/>
        <end position="83"/>
    </location>
</feature>
<feature type="domain" description="4Fe-4S ferredoxin-type 2" evidence="1">
    <location>
        <begin position="94"/>
        <end position="123"/>
    </location>
</feature>
<feature type="binding site" evidence="1">
    <location>
        <position position="63"/>
    </location>
    <ligand>
        <name>[4Fe-4S] cluster</name>
        <dbReference type="ChEBI" id="CHEBI:49883"/>
        <label>1</label>
    </ligand>
</feature>
<feature type="binding site" evidence="1">
    <location>
        <position position="66"/>
    </location>
    <ligand>
        <name>[4Fe-4S] cluster</name>
        <dbReference type="ChEBI" id="CHEBI:49883"/>
        <label>1</label>
    </ligand>
</feature>
<feature type="binding site" evidence="1">
    <location>
        <position position="69"/>
    </location>
    <ligand>
        <name>[4Fe-4S] cluster</name>
        <dbReference type="ChEBI" id="CHEBI:49883"/>
        <label>1</label>
    </ligand>
</feature>
<feature type="binding site" evidence="1">
    <location>
        <position position="73"/>
    </location>
    <ligand>
        <name>[4Fe-4S] cluster</name>
        <dbReference type="ChEBI" id="CHEBI:49883"/>
        <label>2</label>
    </ligand>
</feature>
<feature type="binding site" evidence="1">
    <location>
        <position position="103"/>
    </location>
    <ligand>
        <name>[4Fe-4S] cluster</name>
        <dbReference type="ChEBI" id="CHEBI:49883"/>
        <label>2</label>
    </ligand>
</feature>
<feature type="binding site" evidence="1">
    <location>
        <position position="106"/>
    </location>
    <ligand>
        <name>[4Fe-4S] cluster</name>
        <dbReference type="ChEBI" id="CHEBI:49883"/>
        <label>2</label>
    </ligand>
</feature>
<feature type="binding site" evidence="1">
    <location>
        <position position="109"/>
    </location>
    <ligand>
        <name>[4Fe-4S] cluster</name>
        <dbReference type="ChEBI" id="CHEBI:49883"/>
        <label>2</label>
    </ligand>
</feature>
<feature type="binding site" evidence="1">
    <location>
        <position position="113"/>
    </location>
    <ligand>
        <name>[4Fe-4S] cluster</name>
        <dbReference type="ChEBI" id="CHEBI:49883"/>
        <label>1</label>
    </ligand>
</feature>
<gene>
    <name evidence="1" type="primary">nuoI</name>
    <name type="ordered locus">BruAb1_0824</name>
</gene>
<evidence type="ECO:0000255" key="1">
    <source>
        <dbReference type="HAMAP-Rule" id="MF_01351"/>
    </source>
</evidence>
<name>NUOI_BRUAB</name>
<proteinExistence type="inferred from homology"/>
<dbReference type="EC" id="7.1.1.-" evidence="1"/>
<dbReference type="EMBL" id="AE017223">
    <property type="protein sequence ID" value="AAX74191.1"/>
    <property type="molecule type" value="Genomic_DNA"/>
</dbReference>
<dbReference type="RefSeq" id="WP_002963945.1">
    <property type="nucleotide sequence ID" value="NC_006932.1"/>
</dbReference>
<dbReference type="SMR" id="Q57DU3"/>
<dbReference type="EnsemblBacteria" id="AAX74191">
    <property type="protein sequence ID" value="AAX74191"/>
    <property type="gene ID" value="BruAb1_0824"/>
</dbReference>
<dbReference type="GeneID" id="97533883"/>
<dbReference type="KEGG" id="bmb:BruAb1_0824"/>
<dbReference type="HOGENOM" id="CLU_067218_5_1_5"/>
<dbReference type="Proteomes" id="UP000000540">
    <property type="component" value="Chromosome I"/>
</dbReference>
<dbReference type="GO" id="GO:0005886">
    <property type="term" value="C:plasma membrane"/>
    <property type="evidence" value="ECO:0007669"/>
    <property type="project" value="UniProtKB-SubCell"/>
</dbReference>
<dbReference type="GO" id="GO:0051539">
    <property type="term" value="F:4 iron, 4 sulfur cluster binding"/>
    <property type="evidence" value="ECO:0007669"/>
    <property type="project" value="UniProtKB-KW"/>
</dbReference>
<dbReference type="GO" id="GO:0005506">
    <property type="term" value="F:iron ion binding"/>
    <property type="evidence" value="ECO:0007669"/>
    <property type="project" value="UniProtKB-UniRule"/>
</dbReference>
<dbReference type="GO" id="GO:0050136">
    <property type="term" value="F:NADH:ubiquinone reductase (non-electrogenic) activity"/>
    <property type="evidence" value="ECO:0007669"/>
    <property type="project" value="UniProtKB-UniRule"/>
</dbReference>
<dbReference type="GO" id="GO:0048038">
    <property type="term" value="F:quinone binding"/>
    <property type="evidence" value="ECO:0007669"/>
    <property type="project" value="UniProtKB-KW"/>
</dbReference>
<dbReference type="GO" id="GO:0009060">
    <property type="term" value="P:aerobic respiration"/>
    <property type="evidence" value="ECO:0007669"/>
    <property type="project" value="TreeGrafter"/>
</dbReference>
<dbReference type="FunFam" id="3.30.70.3270:FF:000001">
    <property type="entry name" value="NADH-quinone oxidoreductase subunit I 1"/>
    <property type="match status" value="1"/>
</dbReference>
<dbReference type="Gene3D" id="3.30.70.3270">
    <property type="match status" value="1"/>
</dbReference>
<dbReference type="HAMAP" id="MF_01351">
    <property type="entry name" value="NDH1_NuoI"/>
    <property type="match status" value="1"/>
</dbReference>
<dbReference type="InterPro" id="IPR017896">
    <property type="entry name" value="4Fe4S_Fe-S-bd"/>
</dbReference>
<dbReference type="InterPro" id="IPR017900">
    <property type="entry name" value="4Fe4S_Fe_S_CS"/>
</dbReference>
<dbReference type="InterPro" id="IPR010226">
    <property type="entry name" value="NADH_quinone_OxRdtase_chainI"/>
</dbReference>
<dbReference type="NCBIfam" id="TIGR01971">
    <property type="entry name" value="NuoI"/>
    <property type="match status" value="1"/>
</dbReference>
<dbReference type="NCBIfam" id="NF004538">
    <property type="entry name" value="PRK05888.1-4"/>
    <property type="match status" value="1"/>
</dbReference>
<dbReference type="NCBIfam" id="NF004539">
    <property type="entry name" value="PRK05888.1-5"/>
    <property type="match status" value="1"/>
</dbReference>
<dbReference type="PANTHER" id="PTHR10849:SF20">
    <property type="entry name" value="NADH DEHYDROGENASE [UBIQUINONE] IRON-SULFUR PROTEIN 8, MITOCHONDRIAL"/>
    <property type="match status" value="1"/>
</dbReference>
<dbReference type="PANTHER" id="PTHR10849">
    <property type="entry name" value="NADH DEHYDROGENASE UBIQUINONE IRON-SULFUR PROTEIN 8, MITOCHONDRIAL"/>
    <property type="match status" value="1"/>
</dbReference>
<dbReference type="Pfam" id="PF12838">
    <property type="entry name" value="Fer4_7"/>
    <property type="match status" value="1"/>
</dbReference>
<dbReference type="SUPFAM" id="SSF54862">
    <property type="entry name" value="4Fe-4S ferredoxins"/>
    <property type="match status" value="1"/>
</dbReference>
<dbReference type="PROSITE" id="PS00198">
    <property type="entry name" value="4FE4S_FER_1"/>
    <property type="match status" value="2"/>
</dbReference>
<dbReference type="PROSITE" id="PS51379">
    <property type="entry name" value="4FE4S_FER_2"/>
    <property type="match status" value="2"/>
</dbReference>
<keyword id="KW-0004">4Fe-4S</keyword>
<keyword id="KW-0997">Cell inner membrane</keyword>
<keyword id="KW-1003">Cell membrane</keyword>
<keyword id="KW-0408">Iron</keyword>
<keyword id="KW-0411">Iron-sulfur</keyword>
<keyword id="KW-0472">Membrane</keyword>
<keyword id="KW-0479">Metal-binding</keyword>
<keyword id="KW-0520">NAD</keyword>
<keyword id="KW-0874">Quinone</keyword>
<keyword id="KW-0677">Repeat</keyword>
<keyword id="KW-1278">Translocase</keyword>
<keyword id="KW-0830">Ubiquinone</keyword>
<protein>
    <recommendedName>
        <fullName evidence="1">NADH-quinone oxidoreductase subunit I</fullName>
        <ecNumber evidence="1">7.1.1.-</ecNumber>
    </recommendedName>
    <alternativeName>
        <fullName evidence="1">NADH dehydrogenase I subunit I</fullName>
    </alternativeName>
    <alternativeName>
        <fullName evidence="1">NDH-1 subunit I</fullName>
    </alternativeName>
</protein>
<sequence>MASIAQAAKSLLLKEFASAFALSMRQFFAPKATLNYPHEKGPVSPRFRGEHALRRYPNGEERCIACKLCEAICPAQAITIEAGPRRNDGTRRTVRYDIDMVKCIYCGFCQEACPVDAIVEGPNFEFATETREELYYDKDKLLANGDRWEREIARNIAMDAPYR</sequence>
<reference key="1">
    <citation type="journal article" date="2005" name="J. Bacteriol.">
        <title>Completion of the genome sequence of Brucella abortus and comparison to the highly similar genomes of Brucella melitensis and Brucella suis.</title>
        <authorList>
            <person name="Halling S.M."/>
            <person name="Peterson-Burch B.D."/>
            <person name="Bricker B.J."/>
            <person name="Zuerner R.L."/>
            <person name="Qing Z."/>
            <person name="Li L.-L."/>
            <person name="Kapur V."/>
            <person name="Alt D.P."/>
            <person name="Olsen S.C."/>
        </authorList>
    </citation>
    <scope>NUCLEOTIDE SEQUENCE [LARGE SCALE GENOMIC DNA]</scope>
    <source>
        <strain>9-941</strain>
    </source>
</reference>